<comment type="function">
    <text evidence="1">The RuvA-RuvB-RuvC complex processes Holliday junction (HJ) DNA during genetic recombination and DNA repair, while the RuvA-RuvB complex plays an important role in the rescue of blocked DNA replication forks via replication fork reversal (RFR). RuvA specifically binds to HJ cruciform DNA, conferring on it an open structure. The RuvB hexamer acts as an ATP-dependent pump, pulling dsDNA into and through the RuvAB complex. RuvB forms 2 homohexamers on either side of HJ DNA bound by 1 or 2 RuvA tetramers; 4 subunits per hexamer contact DNA at a time. Coordinated motions by a converter formed by DNA-disengaged RuvB subunits stimulates ATP hydrolysis and nucleotide exchange. Immobilization of the converter enables RuvB to convert the ATP-contained energy into a lever motion, pulling 2 nucleotides of DNA out of the RuvA tetramer per ATP hydrolyzed, thus driving DNA branch migration. The RuvB motors rotate together with the DNA substrate, which together with the progressing nucleotide cycle form the mechanistic basis for DNA recombination by continuous HJ branch migration. Branch migration allows RuvC to scan DNA until it finds its consensus sequence, where it cleaves and resolves cruciform DNA.</text>
</comment>
<comment type="catalytic activity">
    <reaction evidence="1">
        <text>ATP + H2O = ADP + phosphate + H(+)</text>
        <dbReference type="Rhea" id="RHEA:13065"/>
        <dbReference type="ChEBI" id="CHEBI:15377"/>
        <dbReference type="ChEBI" id="CHEBI:15378"/>
        <dbReference type="ChEBI" id="CHEBI:30616"/>
        <dbReference type="ChEBI" id="CHEBI:43474"/>
        <dbReference type="ChEBI" id="CHEBI:456216"/>
    </reaction>
</comment>
<comment type="subunit">
    <text evidence="1">Homohexamer. Forms an RuvA(8)-RuvB(12)-Holliday junction (HJ) complex. HJ DNA is sandwiched between 2 RuvA tetramers; dsDNA enters through RuvA and exits via RuvB. An RuvB hexamer assembles on each DNA strand where it exits the tetramer. Each RuvB hexamer is contacted by two RuvA subunits (via domain III) on 2 adjacent RuvB subunits; this complex drives branch migration. In the full resolvosome a probable DNA-RuvA(4)-RuvB(12)-RuvC(2) complex forms which resolves the HJ.</text>
</comment>
<comment type="subcellular location">
    <subcellularLocation>
        <location evidence="1">Cytoplasm</location>
    </subcellularLocation>
</comment>
<comment type="domain">
    <text evidence="1">Has 3 domains, the large (RuvB-L) and small ATPase (RuvB-S) domains and the C-terminal head (RuvB-H) domain. The head domain binds DNA, while the ATPase domains jointly bind ATP, ADP or are empty depending on the state of the subunit in the translocation cycle. During a single DNA translocation step the structure of each domain remains the same, but their relative positions change.</text>
</comment>
<comment type="similarity">
    <text evidence="1">Belongs to the RuvB family.</text>
</comment>
<evidence type="ECO:0000255" key="1">
    <source>
        <dbReference type="HAMAP-Rule" id="MF_00016"/>
    </source>
</evidence>
<organism>
    <name type="scientific">Pseudomonas putida (strain ATCC 700007 / DSM 6899 / JCM 31910 / BCRC 17059 / LMG 24140 / F1)</name>
    <dbReference type="NCBI Taxonomy" id="351746"/>
    <lineage>
        <taxon>Bacteria</taxon>
        <taxon>Pseudomonadati</taxon>
        <taxon>Pseudomonadota</taxon>
        <taxon>Gammaproteobacteria</taxon>
        <taxon>Pseudomonadales</taxon>
        <taxon>Pseudomonadaceae</taxon>
        <taxon>Pseudomonas</taxon>
    </lineage>
</organism>
<name>RUVB_PSEP1</name>
<dbReference type="EC" id="3.6.4.-" evidence="1"/>
<dbReference type="EMBL" id="CP000712">
    <property type="protein sequence ID" value="ABQ77407.1"/>
    <property type="molecule type" value="Genomic_DNA"/>
</dbReference>
<dbReference type="SMR" id="A5VZU7"/>
<dbReference type="KEGG" id="ppf:Pput_1246"/>
<dbReference type="eggNOG" id="COG2255">
    <property type="taxonomic scope" value="Bacteria"/>
</dbReference>
<dbReference type="HOGENOM" id="CLU_055599_1_0_6"/>
<dbReference type="GO" id="GO:0005737">
    <property type="term" value="C:cytoplasm"/>
    <property type="evidence" value="ECO:0007669"/>
    <property type="project" value="UniProtKB-SubCell"/>
</dbReference>
<dbReference type="GO" id="GO:0048476">
    <property type="term" value="C:Holliday junction resolvase complex"/>
    <property type="evidence" value="ECO:0007669"/>
    <property type="project" value="UniProtKB-UniRule"/>
</dbReference>
<dbReference type="GO" id="GO:0005524">
    <property type="term" value="F:ATP binding"/>
    <property type="evidence" value="ECO:0007669"/>
    <property type="project" value="UniProtKB-UniRule"/>
</dbReference>
<dbReference type="GO" id="GO:0016887">
    <property type="term" value="F:ATP hydrolysis activity"/>
    <property type="evidence" value="ECO:0007669"/>
    <property type="project" value="InterPro"/>
</dbReference>
<dbReference type="GO" id="GO:0000400">
    <property type="term" value="F:four-way junction DNA binding"/>
    <property type="evidence" value="ECO:0007669"/>
    <property type="project" value="UniProtKB-UniRule"/>
</dbReference>
<dbReference type="GO" id="GO:0009378">
    <property type="term" value="F:four-way junction helicase activity"/>
    <property type="evidence" value="ECO:0007669"/>
    <property type="project" value="InterPro"/>
</dbReference>
<dbReference type="GO" id="GO:0006310">
    <property type="term" value="P:DNA recombination"/>
    <property type="evidence" value="ECO:0007669"/>
    <property type="project" value="UniProtKB-UniRule"/>
</dbReference>
<dbReference type="GO" id="GO:0006281">
    <property type="term" value="P:DNA repair"/>
    <property type="evidence" value="ECO:0007669"/>
    <property type="project" value="UniProtKB-UniRule"/>
</dbReference>
<dbReference type="CDD" id="cd00009">
    <property type="entry name" value="AAA"/>
    <property type="match status" value="1"/>
</dbReference>
<dbReference type="FunFam" id="1.10.10.10:FF:000086">
    <property type="entry name" value="Holliday junction ATP-dependent DNA helicase RuvB"/>
    <property type="match status" value="1"/>
</dbReference>
<dbReference type="FunFam" id="1.10.8.60:FF:000023">
    <property type="entry name" value="Holliday junction ATP-dependent DNA helicase RuvB"/>
    <property type="match status" value="1"/>
</dbReference>
<dbReference type="FunFam" id="3.40.50.300:FF:000073">
    <property type="entry name" value="Holliday junction ATP-dependent DNA helicase RuvB"/>
    <property type="match status" value="1"/>
</dbReference>
<dbReference type="Gene3D" id="1.10.8.60">
    <property type="match status" value="1"/>
</dbReference>
<dbReference type="Gene3D" id="3.40.50.300">
    <property type="entry name" value="P-loop containing nucleotide triphosphate hydrolases"/>
    <property type="match status" value="1"/>
</dbReference>
<dbReference type="Gene3D" id="1.10.10.10">
    <property type="entry name" value="Winged helix-like DNA-binding domain superfamily/Winged helix DNA-binding domain"/>
    <property type="match status" value="1"/>
</dbReference>
<dbReference type="HAMAP" id="MF_00016">
    <property type="entry name" value="DNA_HJ_migration_RuvB"/>
    <property type="match status" value="1"/>
</dbReference>
<dbReference type="InterPro" id="IPR003593">
    <property type="entry name" value="AAA+_ATPase"/>
</dbReference>
<dbReference type="InterPro" id="IPR041445">
    <property type="entry name" value="AAA_lid_4"/>
</dbReference>
<dbReference type="InterPro" id="IPR004605">
    <property type="entry name" value="DNA_helicase_Holl-junc_RuvB"/>
</dbReference>
<dbReference type="InterPro" id="IPR027417">
    <property type="entry name" value="P-loop_NTPase"/>
</dbReference>
<dbReference type="InterPro" id="IPR008824">
    <property type="entry name" value="RuvB-like_N"/>
</dbReference>
<dbReference type="InterPro" id="IPR008823">
    <property type="entry name" value="RuvB_C"/>
</dbReference>
<dbReference type="InterPro" id="IPR036388">
    <property type="entry name" value="WH-like_DNA-bd_sf"/>
</dbReference>
<dbReference type="InterPro" id="IPR036390">
    <property type="entry name" value="WH_DNA-bd_sf"/>
</dbReference>
<dbReference type="NCBIfam" id="NF000868">
    <property type="entry name" value="PRK00080.1"/>
    <property type="match status" value="1"/>
</dbReference>
<dbReference type="NCBIfam" id="TIGR00635">
    <property type="entry name" value="ruvB"/>
    <property type="match status" value="1"/>
</dbReference>
<dbReference type="PANTHER" id="PTHR42848">
    <property type="match status" value="1"/>
</dbReference>
<dbReference type="PANTHER" id="PTHR42848:SF1">
    <property type="entry name" value="HOLLIDAY JUNCTION BRANCH MIGRATION COMPLEX SUBUNIT RUVB"/>
    <property type="match status" value="1"/>
</dbReference>
<dbReference type="Pfam" id="PF17864">
    <property type="entry name" value="AAA_lid_4"/>
    <property type="match status" value="1"/>
</dbReference>
<dbReference type="Pfam" id="PF05491">
    <property type="entry name" value="RuvB_C"/>
    <property type="match status" value="1"/>
</dbReference>
<dbReference type="Pfam" id="PF05496">
    <property type="entry name" value="RuvB_N"/>
    <property type="match status" value="1"/>
</dbReference>
<dbReference type="SMART" id="SM00382">
    <property type="entry name" value="AAA"/>
    <property type="match status" value="1"/>
</dbReference>
<dbReference type="SUPFAM" id="SSF52540">
    <property type="entry name" value="P-loop containing nucleoside triphosphate hydrolases"/>
    <property type="match status" value="1"/>
</dbReference>
<dbReference type="SUPFAM" id="SSF46785">
    <property type="entry name" value="Winged helix' DNA-binding domain"/>
    <property type="match status" value="1"/>
</dbReference>
<sequence length="348" mass="38464">MIEADRLIAASGRDREEVQDRAIRPLSLDEYIGQPVVREQMALFIQAARGRGESLDHTLIFGPPGLGKTTLANIIAHEMGVSVKSTSGPILERPGDLAAMLTNLEPHDVLFIDEIHRLSPVVEEVLYPAMEDFQLDIMIGEGPAARSIKLDLPPFTLVGATTRAGMLTNPLRDRFGIVQRLEFYNDKDLSTIVSRSANILGLAIEDQGAYEIARRARGTPRIANRLLRRVRDYAEVRGKGQITKAVADMALNLLDVDERGFDHSDRRLLLTMIEKFDGGPVGVDNLAAAISEERHTIEDVLEPYLIQQGYIMRTPRGRVVTRHAYLHFGLNIPGRLGEGGDFSGPGDE</sequence>
<feature type="chain" id="PRO_1000001450" description="Holliday junction branch migration complex subunit RuvB">
    <location>
        <begin position="1"/>
        <end position="348"/>
    </location>
</feature>
<feature type="region of interest" description="Large ATPase domain (RuvB-L)" evidence="1">
    <location>
        <begin position="4"/>
        <end position="184"/>
    </location>
</feature>
<feature type="region of interest" description="Small ATPAse domain (RuvB-S)" evidence="1">
    <location>
        <begin position="185"/>
        <end position="255"/>
    </location>
</feature>
<feature type="region of interest" description="Head domain (RuvB-H)" evidence="1">
    <location>
        <begin position="258"/>
        <end position="348"/>
    </location>
</feature>
<feature type="binding site" evidence="1">
    <location>
        <position position="23"/>
    </location>
    <ligand>
        <name>ATP</name>
        <dbReference type="ChEBI" id="CHEBI:30616"/>
    </ligand>
</feature>
<feature type="binding site" evidence="1">
    <location>
        <position position="24"/>
    </location>
    <ligand>
        <name>ATP</name>
        <dbReference type="ChEBI" id="CHEBI:30616"/>
    </ligand>
</feature>
<feature type="binding site" evidence="1">
    <location>
        <position position="65"/>
    </location>
    <ligand>
        <name>ATP</name>
        <dbReference type="ChEBI" id="CHEBI:30616"/>
    </ligand>
</feature>
<feature type="binding site" evidence="1">
    <location>
        <position position="68"/>
    </location>
    <ligand>
        <name>ATP</name>
        <dbReference type="ChEBI" id="CHEBI:30616"/>
    </ligand>
</feature>
<feature type="binding site" evidence="1">
    <location>
        <position position="69"/>
    </location>
    <ligand>
        <name>ATP</name>
        <dbReference type="ChEBI" id="CHEBI:30616"/>
    </ligand>
</feature>
<feature type="binding site" evidence="1">
    <location>
        <position position="69"/>
    </location>
    <ligand>
        <name>Mg(2+)</name>
        <dbReference type="ChEBI" id="CHEBI:18420"/>
    </ligand>
</feature>
<feature type="binding site" evidence="1">
    <location>
        <position position="70"/>
    </location>
    <ligand>
        <name>ATP</name>
        <dbReference type="ChEBI" id="CHEBI:30616"/>
    </ligand>
</feature>
<feature type="binding site" evidence="1">
    <location>
        <begin position="131"/>
        <end position="133"/>
    </location>
    <ligand>
        <name>ATP</name>
        <dbReference type="ChEBI" id="CHEBI:30616"/>
    </ligand>
</feature>
<feature type="binding site" evidence="1">
    <location>
        <position position="174"/>
    </location>
    <ligand>
        <name>ATP</name>
        <dbReference type="ChEBI" id="CHEBI:30616"/>
    </ligand>
</feature>
<feature type="binding site" evidence="1">
    <location>
        <position position="184"/>
    </location>
    <ligand>
        <name>ATP</name>
        <dbReference type="ChEBI" id="CHEBI:30616"/>
    </ligand>
</feature>
<feature type="binding site" evidence="1">
    <location>
        <position position="221"/>
    </location>
    <ligand>
        <name>ATP</name>
        <dbReference type="ChEBI" id="CHEBI:30616"/>
    </ligand>
</feature>
<feature type="binding site" evidence="1">
    <location>
        <position position="294"/>
    </location>
    <ligand>
        <name>DNA</name>
        <dbReference type="ChEBI" id="CHEBI:16991"/>
    </ligand>
</feature>
<feature type="binding site" evidence="1">
    <location>
        <position position="313"/>
    </location>
    <ligand>
        <name>DNA</name>
        <dbReference type="ChEBI" id="CHEBI:16991"/>
    </ligand>
</feature>
<feature type="binding site" evidence="1">
    <location>
        <position position="318"/>
    </location>
    <ligand>
        <name>DNA</name>
        <dbReference type="ChEBI" id="CHEBI:16991"/>
    </ligand>
</feature>
<keyword id="KW-0067">ATP-binding</keyword>
<keyword id="KW-0963">Cytoplasm</keyword>
<keyword id="KW-0227">DNA damage</keyword>
<keyword id="KW-0233">DNA recombination</keyword>
<keyword id="KW-0234">DNA repair</keyword>
<keyword id="KW-0238">DNA-binding</keyword>
<keyword id="KW-0378">Hydrolase</keyword>
<keyword id="KW-0547">Nucleotide-binding</keyword>
<gene>
    <name evidence="1" type="primary">ruvB</name>
    <name type="ordered locus">Pput_1246</name>
</gene>
<protein>
    <recommendedName>
        <fullName evidence="1">Holliday junction branch migration complex subunit RuvB</fullName>
        <ecNumber evidence="1">3.6.4.-</ecNumber>
    </recommendedName>
</protein>
<proteinExistence type="inferred from homology"/>
<accession>A5VZU7</accession>
<reference key="1">
    <citation type="submission" date="2007-05" db="EMBL/GenBank/DDBJ databases">
        <title>Complete sequence of Pseudomonas putida F1.</title>
        <authorList>
            <consortium name="US DOE Joint Genome Institute"/>
            <person name="Copeland A."/>
            <person name="Lucas S."/>
            <person name="Lapidus A."/>
            <person name="Barry K."/>
            <person name="Detter J.C."/>
            <person name="Glavina del Rio T."/>
            <person name="Hammon N."/>
            <person name="Israni S."/>
            <person name="Dalin E."/>
            <person name="Tice H."/>
            <person name="Pitluck S."/>
            <person name="Chain P."/>
            <person name="Malfatti S."/>
            <person name="Shin M."/>
            <person name="Vergez L."/>
            <person name="Schmutz J."/>
            <person name="Larimer F."/>
            <person name="Land M."/>
            <person name="Hauser L."/>
            <person name="Kyrpides N."/>
            <person name="Lykidis A."/>
            <person name="Parales R."/>
            <person name="Richardson P."/>
        </authorList>
    </citation>
    <scope>NUCLEOTIDE SEQUENCE [LARGE SCALE GENOMIC DNA]</scope>
    <source>
        <strain>ATCC 700007 / DSM 6899 / JCM 31910 / BCRC 17059 / LMG 24140 / F1</strain>
    </source>
</reference>